<protein>
    <recommendedName>
        <fullName>Arachidonate 5-lipoxygenase-activating protein</fullName>
    </recommendedName>
    <alternativeName>
        <fullName>FLAP</fullName>
    </alternativeName>
    <alternativeName>
        <fullName>MK-886-binding protein</fullName>
    </alternativeName>
</protein>
<keyword id="KW-0256">Endoplasmic reticulum</keyword>
<keyword id="KW-0434">Leukotriene biosynthesis</keyword>
<keyword id="KW-0472">Membrane</keyword>
<keyword id="KW-0539">Nucleus</keyword>
<keyword id="KW-1185">Reference proteome</keyword>
<keyword id="KW-0812">Transmembrane</keyword>
<keyword id="KW-1133">Transmembrane helix</keyword>
<dbReference type="EMBL" id="AK004002">
    <property type="protein sequence ID" value="BAB23117.1"/>
    <property type="molecule type" value="mRNA"/>
</dbReference>
<dbReference type="EMBL" id="BC026209">
    <property type="protein sequence ID" value="AAH26209.1"/>
    <property type="molecule type" value="mRNA"/>
</dbReference>
<dbReference type="EMBL" id="M96554">
    <property type="protein sequence ID" value="AAA37632.1"/>
    <property type="molecule type" value="mRNA"/>
</dbReference>
<dbReference type="CCDS" id="CCDS39407.1"/>
<dbReference type="RefSeq" id="NP_033793.1">
    <property type="nucleotide sequence ID" value="NM_009663.2"/>
</dbReference>
<dbReference type="SMR" id="P30355"/>
<dbReference type="BioGRID" id="198077">
    <property type="interactions" value="2"/>
</dbReference>
<dbReference type="FunCoup" id="P30355">
    <property type="interactions" value="814"/>
</dbReference>
<dbReference type="STRING" id="10090.ENSMUSP00000071130"/>
<dbReference type="BindingDB" id="P30355"/>
<dbReference type="ChEMBL" id="CHEMBL3414408"/>
<dbReference type="PhosphoSitePlus" id="P30355"/>
<dbReference type="PaxDb" id="10090-ENSMUSP00000071130"/>
<dbReference type="PeptideAtlas" id="P30355"/>
<dbReference type="ProteomicsDB" id="296392"/>
<dbReference type="Pumba" id="P30355"/>
<dbReference type="Antibodypedia" id="22770">
    <property type="antibodies" value="216 antibodies from 31 providers"/>
</dbReference>
<dbReference type="DNASU" id="11690"/>
<dbReference type="Ensembl" id="ENSMUST00000071130.5">
    <property type="protein sequence ID" value="ENSMUSP00000071130.4"/>
    <property type="gene ID" value="ENSMUSG00000060063.10"/>
</dbReference>
<dbReference type="GeneID" id="11690"/>
<dbReference type="KEGG" id="mmu:11690"/>
<dbReference type="UCSC" id="uc009app.1">
    <property type="organism name" value="mouse"/>
</dbReference>
<dbReference type="AGR" id="MGI:107505"/>
<dbReference type="CTD" id="241"/>
<dbReference type="MGI" id="MGI:107505">
    <property type="gene designation" value="Alox5ap"/>
</dbReference>
<dbReference type="VEuPathDB" id="HostDB:ENSMUSG00000060063"/>
<dbReference type="eggNOG" id="ENOG502RZJB">
    <property type="taxonomic scope" value="Eukaryota"/>
</dbReference>
<dbReference type="GeneTree" id="ENSGT00940000158706"/>
<dbReference type="HOGENOM" id="CLU_110291_0_0_1"/>
<dbReference type="InParanoid" id="P30355"/>
<dbReference type="OMA" id="NAPWHTQ"/>
<dbReference type="OrthoDB" id="8659873at2759"/>
<dbReference type="PhylomeDB" id="P30355"/>
<dbReference type="TreeFam" id="TF105328"/>
<dbReference type="Reactome" id="R-MMU-2142688">
    <property type="pathway name" value="Synthesis of 5-eicosatetraenoic acids"/>
</dbReference>
<dbReference type="Reactome" id="R-MMU-2142691">
    <property type="pathway name" value="Synthesis of Leukotrienes (LT) and Eoxins (EX)"/>
</dbReference>
<dbReference type="Reactome" id="R-MMU-2142700">
    <property type="pathway name" value="Biosynthesis of Lipoxins (LX)"/>
</dbReference>
<dbReference type="BioGRID-ORCS" id="11690">
    <property type="hits" value="3 hits in 79 CRISPR screens"/>
</dbReference>
<dbReference type="PRO" id="PR:P30355"/>
<dbReference type="Proteomes" id="UP000000589">
    <property type="component" value="Chromosome 5"/>
</dbReference>
<dbReference type="RNAct" id="P30355">
    <property type="molecule type" value="protein"/>
</dbReference>
<dbReference type="Bgee" id="ENSMUSG00000060063">
    <property type="expression patterns" value="Expressed in granulocyte and 208 other cell types or tissues"/>
</dbReference>
<dbReference type="ExpressionAtlas" id="P30355">
    <property type="expression patterns" value="baseline and differential"/>
</dbReference>
<dbReference type="GO" id="GO:0005789">
    <property type="term" value="C:endoplasmic reticulum membrane"/>
    <property type="evidence" value="ECO:0007669"/>
    <property type="project" value="UniProtKB-SubCell"/>
</dbReference>
<dbReference type="GO" id="GO:0005635">
    <property type="term" value="C:nuclear envelope"/>
    <property type="evidence" value="ECO:0000250"/>
    <property type="project" value="UniProtKB"/>
</dbReference>
<dbReference type="GO" id="GO:0031965">
    <property type="term" value="C:nuclear membrane"/>
    <property type="evidence" value="ECO:0000250"/>
    <property type="project" value="UniProtKB"/>
</dbReference>
<dbReference type="GO" id="GO:0005634">
    <property type="term" value="C:nucleus"/>
    <property type="evidence" value="ECO:0000314"/>
    <property type="project" value="MGI"/>
</dbReference>
<dbReference type="GO" id="GO:0050544">
    <property type="term" value="F:arachidonate binding"/>
    <property type="evidence" value="ECO:0000250"/>
    <property type="project" value="UniProtKB"/>
</dbReference>
<dbReference type="GO" id="GO:0008047">
    <property type="term" value="F:enzyme activator activity"/>
    <property type="evidence" value="ECO:0007669"/>
    <property type="project" value="InterPro"/>
</dbReference>
<dbReference type="GO" id="GO:0071277">
    <property type="term" value="P:cellular response to calcium ion"/>
    <property type="evidence" value="ECO:0007669"/>
    <property type="project" value="Ensembl"/>
</dbReference>
<dbReference type="GO" id="GO:0019370">
    <property type="term" value="P:leukotriene biosynthetic process"/>
    <property type="evidence" value="ECO:0000314"/>
    <property type="project" value="MGI"/>
</dbReference>
<dbReference type="GO" id="GO:0002540">
    <property type="term" value="P:leukotriene production involved in inflammatory response"/>
    <property type="evidence" value="ECO:0000315"/>
    <property type="project" value="MGI"/>
</dbReference>
<dbReference type="GO" id="GO:0070207">
    <property type="term" value="P:protein homotrimerization"/>
    <property type="evidence" value="ECO:0007669"/>
    <property type="project" value="Ensembl"/>
</dbReference>
<dbReference type="FunFam" id="1.20.120.550:FF:000003">
    <property type="entry name" value="Leukotriene C4 synthase"/>
    <property type="match status" value="1"/>
</dbReference>
<dbReference type="Gene3D" id="1.20.120.550">
    <property type="entry name" value="Membrane associated eicosanoid/glutathione metabolism-like domain"/>
    <property type="match status" value="1"/>
</dbReference>
<dbReference type="InterPro" id="IPR001446">
    <property type="entry name" value="5_LipOase_AP"/>
</dbReference>
<dbReference type="InterPro" id="IPR018295">
    <property type="entry name" value="FLAP/GST2/LTC4S_CS"/>
</dbReference>
<dbReference type="InterPro" id="IPR050997">
    <property type="entry name" value="MAPEG"/>
</dbReference>
<dbReference type="InterPro" id="IPR023352">
    <property type="entry name" value="MAPEG-like_dom_sf"/>
</dbReference>
<dbReference type="InterPro" id="IPR001129">
    <property type="entry name" value="Membr-assoc_MAPEG"/>
</dbReference>
<dbReference type="PANTHER" id="PTHR10250:SF2">
    <property type="entry name" value="ARACHIDONATE 5-LIPOXYGENASE-ACTIVATING PROTEIN"/>
    <property type="match status" value="1"/>
</dbReference>
<dbReference type="PANTHER" id="PTHR10250">
    <property type="entry name" value="MICROSOMAL GLUTATHIONE S-TRANSFERASE"/>
    <property type="match status" value="1"/>
</dbReference>
<dbReference type="Pfam" id="PF01124">
    <property type="entry name" value="MAPEG"/>
    <property type="match status" value="1"/>
</dbReference>
<dbReference type="PRINTS" id="PR00488">
    <property type="entry name" value="5LPOXGNASEAP"/>
</dbReference>
<dbReference type="SUPFAM" id="SSF161084">
    <property type="entry name" value="MAPEG domain-like"/>
    <property type="match status" value="1"/>
</dbReference>
<dbReference type="PROSITE" id="PS01297">
    <property type="entry name" value="FLAP_GST2_LTC4S"/>
    <property type="match status" value="1"/>
</dbReference>
<sequence>MDQEAVGNVVLLALVTLISVVQNAFFAHKVEHESKAHNGRSFQRTGTLAFERVYTANQNCVDAYPTFLVVLWTAGLLCSQVPAAFAGLMYLFVRQKYFVGYLGERTQSTPGYIFGKRIILFLFLMSFAGILNHYLIFFFGSDFENYIRTVSTTISPLLLIP</sequence>
<proteinExistence type="evidence at protein level"/>
<organism>
    <name type="scientific">Mus musculus</name>
    <name type="common">Mouse</name>
    <dbReference type="NCBI Taxonomy" id="10090"/>
    <lineage>
        <taxon>Eukaryota</taxon>
        <taxon>Metazoa</taxon>
        <taxon>Chordata</taxon>
        <taxon>Craniata</taxon>
        <taxon>Vertebrata</taxon>
        <taxon>Euteleostomi</taxon>
        <taxon>Mammalia</taxon>
        <taxon>Eutheria</taxon>
        <taxon>Euarchontoglires</taxon>
        <taxon>Glires</taxon>
        <taxon>Rodentia</taxon>
        <taxon>Myomorpha</taxon>
        <taxon>Muroidea</taxon>
        <taxon>Muridae</taxon>
        <taxon>Murinae</taxon>
        <taxon>Mus</taxon>
        <taxon>Mus</taxon>
    </lineage>
</organism>
<accession>P30355</accession>
<accession>Q9D138</accession>
<evidence type="ECO:0000250" key="1"/>
<evidence type="ECO:0000269" key="2">
    <source>
    </source>
</evidence>
<evidence type="ECO:0000305" key="3"/>
<comment type="function">
    <text evidence="1 2">Required for leukotriene biosynthesis by ALOX5 (5-lipoxygenase). Anchors ALOX5 to the membrane. Binds arachidonic acid, and could play an essential role in the transfer of arachidonic acid to ALOX5. Binds to MK-886, a compound that blocks the biosynthesis of leukotrienes (By similarity).</text>
</comment>
<comment type="subunit">
    <text evidence="2">Homotrimer. Interacts with LTC4S and ALOX5.</text>
</comment>
<comment type="subcellular location">
    <subcellularLocation>
        <location evidence="2">Nucleus membrane</location>
        <topology evidence="2">Multi-pass membrane protein</topology>
    </subcellularLocation>
    <subcellularLocation>
        <location evidence="1">Endoplasmic reticulum membrane</location>
        <topology evidence="1">Multi-pass membrane protein</topology>
    </subcellularLocation>
</comment>
<comment type="domain">
    <text evidence="1">The C-terminal part after residue 140 is mostly disordered.</text>
</comment>
<comment type="similarity">
    <text evidence="3">Belongs to the MAPEG family.</text>
</comment>
<name>AL5AP_MOUSE</name>
<reference key="1">
    <citation type="journal article" date="2005" name="Science">
        <title>The transcriptional landscape of the mammalian genome.</title>
        <authorList>
            <person name="Carninci P."/>
            <person name="Kasukawa T."/>
            <person name="Katayama S."/>
            <person name="Gough J."/>
            <person name="Frith M.C."/>
            <person name="Maeda N."/>
            <person name="Oyama R."/>
            <person name="Ravasi T."/>
            <person name="Lenhard B."/>
            <person name="Wells C."/>
            <person name="Kodzius R."/>
            <person name="Shimokawa K."/>
            <person name="Bajic V.B."/>
            <person name="Brenner S.E."/>
            <person name="Batalov S."/>
            <person name="Forrest A.R."/>
            <person name="Zavolan M."/>
            <person name="Davis M.J."/>
            <person name="Wilming L.G."/>
            <person name="Aidinis V."/>
            <person name="Allen J.E."/>
            <person name="Ambesi-Impiombato A."/>
            <person name="Apweiler R."/>
            <person name="Aturaliya R.N."/>
            <person name="Bailey T.L."/>
            <person name="Bansal M."/>
            <person name="Baxter L."/>
            <person name="Beisel K.W."/>
            <person name="Bersano T."/>
            <person name="Bono H."/>
            <person name="Chalk A.M."/>
            <person name="Chiu K.P."/>
            <person name="Choudhary V."/>
            <person name="Christoffels A."/>
            <person name="Clutterbuck D.R."/>
            <person name="Crowe M.L."/>
            <person name="Dalla E."/>
            <person name="Dalrymple B.P."/>
            <person name="de Bono B."/>
            <person name="Della Gatta G."/>
            <person name="di Bernardo D."/>
            <person name="Down T."/>
            <person name="Engstrom P."/>
            <person name="Fagiolini M."/>
            <person name="Faulkner G."/>
            <person name="Fletcher C.F."/>
            <person name="Fukushima T."/>
            <person name="Furuno M."/>
            <person name="Futaki S."/>
            <person name="Gariboldi M."/>
            <person name="Georgii-Hemming P."/>
            <person name="Gingeras T.R."/>
            <person name="Gojobori T."/>
            <person name="Green R.E."/>
            <person name="Gustincich S."/>
            <person name="Harbers M."/>
            <person name="Hayashi Y."/>
            <person name="Hensch T.K."/>
            <person name="Hirokawa N."/>
            <person name="Hill D."/>
            <person name="Huminiecki L."/>
            <person name="Iacono M."/>
            <person name="Ikeo K."/>
            <person name="Iwama A."/>
            <person name="Ishikawa T."/>
            <person name="Jakt M."/>
            <person name="Kanapin A."/>
            <person name="Katoh M."/>
            <person name="Kawasawa Y."/>
            <person name="Kelso J."/>
            <person name="Kitamura H."/>
            <person name="Kitano H."/>
            <person name="Kollias G."/>
            <person name="Krishnan S.P."/>
            <person name="Kruger A."/>
            <person name="Kummerfeld S.K."/>
            <person name="Kurochkin I.V."/>
            <person name="Lareau L.F."/>
            <person name="Lazarevic D."/>
            <person name="Lipovich L."/>
            <person name="Liu J."/>
            <person name="Liuni S."/>
            <person name="McWilliam S."/>
            <person name="Madan Babu M."/>
            <person name="Madera M."/>
            <person name="Marchionni L."/>
            <person name="Matsuda H."/>
            <person name="Matsuzawa S."/>
            <person name="Miki H."/>
            <person name="Mignone F."/>
            <person name="Miyake S."/>
            <person name="Morris K."/>
            <person name="Mottagui-Tabar S."/>
            <person name="Mulder N."/>
            <person name="Nakano N."/>
            <person name="Nakauchi H."/>
            <person name="Ng P."/>
            <person name="Nilsson R."/>
            <person name="Nishiguchi S."/>
            <person name="Nishikawa S."/>
            <person name="Nori F."/>
            <person name="Ohara O."/>
            <person name="Okazaki Y."/>
            <person name="Orlando V."/>
            <person name="Pang K.C."/>
            <person name="Pavan W.J."/>
            <person name="Pavesi G."/>
            <person name="Pesole G."/>
            <person name="Petrovsky N."/>
            <person name="Piazza S."/>
            <person name="Reed J."/>
            <person name="Reid J.F."/>
            <person name="Ring B.Z."/>
            <person name="Ringwald M."/>
            <person name="Rost B."/>
            <person name="Ruan Y."/>
            <person name="Salzberg S.L."/>
            <person name="Sandelin A."/>
            <person name="Schneider C."/>
            <person name="Schoenbach C."/>
            <person name="Sekiguchi K."/>
            <person name="Semple C.A."/>
            <person name="Seno S."/>
            <person name="Sessa L."/>
            <person name="Sheng Y."/>
            <person name="Shibata Y."/>
            <person name="Shimada H."/>
            <person name="Shimada K."/>
            <person name="Silva D."/>
            <person name="Sinclair B."/>
            <person name="Sperling S."/>
            <person name="Stupka E."/>
            <person name="Sugiura K."/>
            <person name="Sultana R."/>
            <person name="Takenaka Y."/>
            <person name="Taki K."/>
            <person name="Tammoja K."/>
            <person name="Tan S.L."/>
            <person name="Tang S."/>
            <person name="Taylor M.S."/>
            <person name="Tegner J."/>
            <person name="Teichmann S.A."/>
            <person name="Ueda H.R."/>
            <person name="van Nimwegen E."/>
            <person name="Verardo R."/>
            <person name="Wei C.L."/>
            <person name="Yagi K."/>
            <person name="Yamanishi H."/>
            <person name="Zabarovsky E."/>
            <person name="Zhu S."/>
            <person name="Zimmer A."/>
            <person name="Hide W."/>
            <person name="Bult C."/>
            <person name="Grimmond S.M."/>
            <person name="Teasdale R.D."/>
            <person name="Liu E.T."/>
            <person name="Brusic V."/>
            <person name="Quackenbush J."/>
            <person name="Wahlestedt C."/>
            <person name="Mattick J.S."/>
            <person name="Hume D.A."/>
            <person name="Kai C."/>
            <person name="Sasaki D."/>
            <person name="Tomaru Y."/>
            <person name="Fukuda S."/>
            <person name="Kanamori-Katayama M."/>
            <person name="Suzuki M."/>
            <person name="Aoki J."/>
            <person name="Arakawa T."/>
            <person name="Iida J."/>
            <person name="Imamura K."/>
            <person name="Itoh M."/>
            <person name="Kato T."/>
            <person name="Kawaji H."/>
            <person name="Kawagashira N."/>
            <person name="Kawashima T."/>
            <person name="Kojima M."/>
            <person name="Kondo S."/>
            <person name="Konno H."/>
            <person name="Nakano K."/>
            <person name="Ninomiya N."/>
            <person name="Nishio T."/>
            <person name="Okada M."/>
            <person name="Plessy C."/>
            <person name="Shibata K."/>
            <person name="Shiraki T."/>
            <person name="Suzuki S."/>
            <person name="Tagami M."/>
            <person name="Waki K."/>
            <person name="Watahiki A."/>
            <person name="Okamura-Oho Y."/>
            <person name="Suzuki H."/>
            <person name="Kawai J."/>
            <person name="Hayashizaki Y."/>
        </authorList>
    </citation>
    <scope>NUCLEOTIDE SEQUENCE [LARGE SCALE MRNA]</scope>
    <source>
        <strain>C57BL/6J</strain>
        <tissue>Embryo</tissue>
    </source>
</reference>
<reference key="2">
    <citation type="journal article" date="2004" name="Genome Res.">
        <title>The status, quality, and expansion of the NIH full-length cDNA project: the Mammalian Gene Collection (MGC).</title>
        <authorList>
            <consortium name="The MGC Project Team"/>
        </authorList>
    </citation>
    <scope>NUCLEOTIDE SEQUENCE [LARGE SCALE MRNA]</scope>
    <source>
        <strain>C57BL/6J</strain>
        <tissue>Mammary gland</tissue>
    </source>
</reference>
<reference key="3">
    <citation type="journal article" date="1992" name="Mol. Pharmacol.">
        <title>Cross-species comparison of 5-lipoxygenase-activating protein.</title>
        <authorList>
            <person name="Vickers P.J."/>
            <person name="O'Neill G.P."/>
            <person name="Mancini J.A."/>
            <person name="Charleson S."/>
            <person name="Abramovitz M."/>
        </authorList>
    </citation>
    <scope>NUCLEOTIDE SEQUENCE [MRNA] OF 1-153</scope>
</reference>
<reference key="4">
    <citation type="journal article" date="2008" name="Proc. Natl. Acad. Sci. U.S.A.">
        <title>The nuclear membrane organization of leukotriene synthesis.</title>
        <authorList>
            <person name="Mandal A.K."/>
            <person name="Jones P.B."/>
            <person name="Bair A.M."/>
            <person name="Christmas P."/>
            <person name="Miller D."/>
            <person name="Yamin T.-T."/>
            <person name="Wisniewski D."/>
            <person name="Menke J."/>
            <person name="Evans J.F."/>
            <person name="Hyman B.T."/>
            <person name="Bacskai B."/>
            <person name="Chen M."/>
            <person name="Lee D.M."/>
            <person name="Nikolic B."/>
            <person name="Soberman R.J."/>
        </authorList>
    </citation>
    <scope>SUBCELLULAR LOCATION</scope>
    <scope>FUNCTION</scope>
    <scope>INTERACTION WITH ALOX5</scope>
</reference>
<reference key="5">
    <citation type="journal article" date="2010" name="Cell">
        <title>A tissue-specific atlas of mouse protein phosphorylation and expression.</title>
        <authorList>
            <person name="Huttlin E.L."/>
            <person name="Jedrychowski M.P."/>
            <person name="Elias J.E."/>
            <person name="Goswami T."/>
            <person name="Rad R."/>
            <person name="Beausoleil S.A."/>
            <person name="Villen J."/>
            <person name="Haas W."/>
            <person name="Sowa M.E."/>
            <person name="Gygi S.P."/>
        </authorList>
    </citation>
    <scope>IDENTIFICATION BY MASS SPECTROMETRY [LARGE SCALE ANALYSIS]</scope>
    <source>
        <tissue>Lung</tissue>
        <tissue>Testis</tissue>
    </source>
</reference>
<feature type="chain" id="PRO_0000217753" description="Arachidonate 5-lipoxygenase-activating protein">
    <location>
        <begin position="1"/>
        <end position="161"/>
    </location>
</feature>
<feature type="topological domain" description="Lumenal" evidence="1">
    <location>
        <begin position="1"/>
        <end position="8"/>
    </location>
</feature>
<feature type="transmembrane region" description="Helical" evidence="1">
    <location>
        <begin position="9"/>
        <end position="30"/>
    </location>
</feature>
<feature type="topological domain" description="Cytoplasmic" evidence="1">
    <location>
        <begin position="31"/>
        <end position="52"/>
    </location>
</feature>
<feature type="transmembrane region" description="Helical" evidence="1">
    <location>
        <begin position="53"/>
        <end position="77"/>
    </location>
</feature>
<feature type="topological domain" description="Lumenal" evidence="1">
    <location>
        <begin position="78"/>
        <end position="80"/>
    </location>
</feature>
<feature type="transmembrane region" description="Helical" evidence="1">
    <location>
        <begin position="81"/>
        <end position="102"/>
    </location>
</feature>
<feature type="topological domain" description="Cytoplasmic" evidence="1">
    <location>
        <begin position="103"/>
        <end position="107"/>
    </location>
</feature>
<feature type="intramembrane region" evidence="1">
    <location>
        <begin position="108"/>
        <end position="115"/>
    </location>
</feature>
<feature type="transmembrane region" description="Helical" evidence="1">
    <location>
        <begin position="116"/>
        <end position="128"/>
    </location>
</feature>
<feature type="topological domain" description="Lumenal" evidence="1">
    <location>
        <begin position="129"/>
        <end position="161"/>
    </location>
</feature>
<feature type="sequence conflict" description="In Ref. 3; AAA37632." evidence="3" ref="3">
    <original>D</original>
    <variation>Y</variation>
    <location>
        <position position="142"/>
    </location>
</feature>
<gene>
    <name type="primary">Alox5ap</name>
    <name type="synonym">Flap</name>
</gene>